<dbReference type="EMBL" id="CP000826">
    <property type="protein sequence ID" value="ABV41389.1"/>
    <property type="molecule type" value="Genomic_DNA"/>
</dbReference>
<dbReference type="STRING" id="399741.Spro_2288"/>
<dbReference type="KEGG" id="spe:Spro_2288"/>
<dbReference type="eggNOG" id="ENOG5032SRB">
    <property type="taxonomic scope" value="Bacteria"/>
</dbReference>
<dbReference type="HOGENOM" id="CLU_167574_0_0_6"/>
<dbReference type="OrthoDB" id="6455281at2"/>
<dbReference type="HAMAP" id="MF_01581">
    <property type="entry name" value="UPF0482"/>
    <property type="match status" value="1"/>
</dbReference>
<dbReference type="InterPro" id="IPR009700">
    <property type="entry name" value="DUF1283"/>
</dbReference>
<dbReference type="NCBIfam" id="NF010180">
    <property type="entry name" value="PRK13659.1"/>
    <property type="match status" value="1"/>
</dbReference>
<dbReference type="Pfam" id="PF06932">
    <property type="entry name" value="DUF1283"/>
    <property type="match status" value="1"/>
</dbReference>
<comment type="similarity">
    <text evidence="1">Belongs to the UPF0482 family.</text>
</comment>
<organism>
    <name type="scientific">Serratia proteamaculans (strain 568)</name>
    <dbReference type="NCBI Taxonomy" id="399741"/>
    <lineage>
        <taxon>Bacteria</taxon>
        <taxon>Pseudomonadati</taxon>
        <taxon>Pseudomonadota</taxon>
        <taxon>Gammaproteobacteria</taxon>
        <taxon>Enterobacterales</taxon>
        <taxon>Yersiniaceae</taxon>
        <taxon>Serratia</taxon>
    </lineage>
</organism>
<proteinExistence type="inferred from homology"/>
<protein>
    <recommendedName>
        <fullName evidence="1">UPF0482 protein Spro_2288</fullName>
    </recommendedName>
</protein>
<name>Y2288_SERP5</name>
<reference key="1">
    <citation type="submission" date="2007-09" db="EMBL/GenBank/DDBJ databases">
        <title>Complete sequence of chromosome of Serratia proteamaculans 568.</title>
        <authorList>
            <consortium name="US DOE Joint Genome Institute"/>
            <person name="Copeland A."/>
            <person name="Lucas S."/>
            <person name="Lapidus A."/>
            <person name="Barry K."/>
            <person name="Glavina del Rio T."/>
            <person name="Dalin E."/>
            <person name="Tice H."/>
            <person name="Pitluck S."/>
            <person name="Chain P."/>
            <person name="Malfatti S."/>
            <person name="Shin M."/>
            <person name="Vergez L."/>
            <person name="Schmutz J."/>
            <person name="Larimer F."/>
            <person name="Land M."/>
            <person name="Hauser L."/>
            <person name="Kyrpides N."/>
            <person name="Kim E."/>
            <person name="Taghavi S."/>
            <person name="Newman L."/>
            <person name="Vangronsveld J."/>
            <person name="van der Lelie D."/>
            <person name="Richardson P."/>
        </authorList>
    </citation>
    <scope>NUCLEOTIDE SEQUENCE [LARGE SCALE GENOMIC DNA]</scope>
    <source>
        <strain>568</strain>
    </source>
</reference>
<sequence length="122" mass="13558">MKTLSTQRLLRGMLPVAMLMLMGAWQAPALAASCTQGSTCVTVDGSNSGAMSTEAARQSKQQFNDTKSLRNKVNTRVEKEFDKVDKAIDSEERCDDSLNVNAYWEPNTRKCLDRQTGRQINP</sequence>
<gene>
    <name type="ordered locus">Spro_2288</name>
</gene>
<accession>A8GE49</accession>
<evidence type="ECO:0000255" key="1">
    <source>
        <dbReference type="HAMAP-Rule" id="MF_01581"/>
    </source>
</evidence>
<evidence type="ECO:0000256" key="2">
    <source>
        <dbReference type="SAM" id="MobiDB-lite"/>
    </source>
</evidence>
<feature type="signal peptide" evidence="1">
    <location>
        <begin position="1"/>
        <end position="31"/>
    </location>
</feature>
<feature type="chain" id="PRO_5000279367" description="UPF0482 protein Spro_2288">
    <location>
        <begin position="32"/>
        <end position="122"/>
    </location>
</feature>
<feature type="region of interest" description="Disordered" evidence="2">
    <location>
        <begin position="46"/>
        <end position="71"/>
    </location>
</feature>
<keyword id="KW-0732">Signal</keyword>